<comment type="function">
    <text evidence="1">Essential for the control of the cell cycle at the G2/M (mitosis) transition.</text>
</comment>
<comment type="subunit">
    <text evidence="1">Interacts with the CDK1 protein kinase to form a serine/threonine kinase holoenzyme complex also known as maturation promoting factor (MPF). The cyclin subunit imparts substrate specificity to the complex (By similarity).</text>
</comment>
<comment type="developmental stage">
    <text>Accumulates steadily during G2 and is abruptly destroyed at mitosis.</text>
</comment>
<comment type="similarity">
    <text evidence="3">Belongs to the cyclin family. Cyclin AB subfamily.</text>
</comment>
<protein>
    <recommendedName>
        <fullName>G2/mitotic-specific cyclin-B2</fullName>
    </recommendedName>
</protein>
<organism>
    <name type="scientific">Oryzias curvinotus</name>
    <name type="common">Hynann ricefish</name>
    <name type="synonym">Aplocheilus curvinotus</name>
    <dbReference type="NCBI Taxonomy" id="104658"/>
    <lineage>
        <taxon>Eukaryota</taxon>
        <taxon>Metazoa</taxon>
        <taxon>Chordata</taxon>
        <taxon>Craniata</taxon>
        <taxon>Vertebrata</taxon>
        <taxon>Euteleostomi</taxon>
        <taxon>Actinopterygii</taxon>
        <taxon>Neopterygii</taxon>
        <taxon>Teleostei</taxon>
        <taxon>Neoteleostei</taxon>
        <taxon>Acanthomorphata</taxon>
        <taxon>Ovalentaria</taxon>
        <taxon>Atherinomorphae</taxon>
        <taxon>Beloniformes</taxon>
        <taxon>Adrianichthyidae</taxon>
        <taxon>Oryziinae</taxon>
        <taxon>Oryzias</taxon>
    </lineage>
</organism>
<accession>Q9DGA3</accession>
<keyword id="KW-0131">Cell cycle</keyword>
<keyword id="KW-0132">Cell division</keyword>
<keyword id="KW-0195">Cyclin</keyword>
<keyword id="KW-0498">Mitosis</keyword>
<feature type="chain" id="PRO_0000080366" description="G2/mitotic-specific cyclin-B2">
    <location>
        <begin position="1"/>
        <end position="388"/>
    </location>
</feature>
<feature type="region of interest" description="Disordered" evidence="2">
    <location>
        <begin position="46"/>
        <end position="67"/>
    </location>
</feature>
<gene>
    <name type="primary">ccnb2</name>
</gene>
<dbReference type="EMBL" id="AB050460">
    <property type="protein sequence ID" value="BAB17218.1"/>
    <property type="molecule type" value="mRNA"/>
</dbReference>
<dbReference type="SMR" id="Q9DGA3"/>
<dbReference type="GO" id="GO:0051301">
    <property type="term" value="P:cell division"/>
    <property type="evidence" value="ECO:0007669"/>
    <property type="project" value="UniProtKB-KW"/>
</dbReference>
<dbReference type="CDD" id="cd20507">
    <property type="entry name" value="CYCLIN_CCNB1-like_rpt1"/>
    <property type="match status" value="1"/>
</dbReference>
<dbReference type="FunFam" id="1.10.472.10:FF:000001">
    <property type="entry name" value="G2/mitotic-specific cyclin"/>
    <property type="match status" value="1"/>
</dbReference>
<dbReference type="Gene3D" id="1.10.472.10">
    <property type="entry name" value="Cyclin-like"/>
    <property type="match status" value="2"/>
</dbReference>
<dbReference type="InterPro" id="IPR039361">
    <property type="entry name" value="Cyclin"/>
</dbReference>
<dbReference type="InterPro" id="IPR013763">
    <property type="entry name" value="Cyclin-like_dom"/>
</dbReference>
<dbReference type="InterPro" id="IPR036915">
    <property type="entry name" value="Cyclin-like_sf"/>
</dbReference>
<dbReference type="InterPro" id="IPR004367">
    <property type="entry name" value="Cyclin_C-dom"/>
</dbReference>
<dbReference type="InterPro" id="IPR006671">
    <property type="entry name" value="Cyclin_N"/>
</dbReference>
<dbReference type="PANTHER" id="PTHR10177">
    <property type="entry name" value="CYCLINS"/>
    <property type="match status" value="1"/>
</dbReference>
<dbReference type="Pfam" id="PF02984">
    <property type="entry name" value="Cyclin_C"/>
    <property type="match status" value="1"/>
</dbReference>
<dbReference type="Pfam" id="PF00134">
    <property type="entry name" value="Cyclin_N"/>
    <property type="match status" value="1"/>
</dbReference>
<dbReference type="SMART" id="SM00385">
    <property type="entry name" value="CYCLIN"/>
    <property type="match status" value="2"/>
</dbReference>
<dbReference type="SMART" id="SM01332">
    <property type="entry name" value="Cyclin_C"/>
    <property type="match status" value="1"/>
</dbReference>
<dbReference type="SUPFAM" id="SSF47954">
    <property type="entry name" value="Cyclin-like"/>
    <property type="match status" value="2"/>
</dbReference>
<evidence type="ECO:0000250" key="1"/>
<evidence type="ECO:0000256" key="2">
    <source>
        <dbReference type="SAM" id="MobiDB-lite"/>
    </source>
</evidence>
<evidence type="ECO:0000305" key="3"/>
<sequence>MSSVEVVAQQQQLLAAEHPRRMGKGAAADPRRAALGELTNLNAVAATNGKVGPSKKPSKASCVQKPKPPQLVAPMIQTGAAASAPVSAKPCVKEEQLCQAFSEVLLAVQDVDEQDADQPQLCSQYVKDIYKYLHVLEEQQPVRANYMQGYEVTERMRALLVDWLVQVHSRFQLLQETLYLTVAILDPFLQVHPVSRRKLQLVGVTAMLVACKYEKMYAPEVGDFSYITDNAFTKSQIVEMEQVILRSLSFQLGRPLPLHFLRRASKVAGADVEKHTLAKYLMELTLLDYHMVHYRPSEVAAAALCLSQLLLDGLPWSLTQQQYSTYEEQHLKPIMQHIAKNVVLVNEGRTKFLAVKKKYSSSKLMKISLIPQLNSSTVKALAESLLNP</sequence>
<reference key="1">
    <citation type="submission" date="2000-10" db="EMBL/GenBank/DDBJ databases">
        <title>cDNA cloning of Cdc2 and cyclin B in medaka species.</title>
        <authorList>
            <person name="Yamashita M."/>
            <person name="Mita K."/>
        </authorList>
    </citation>
    <scope>NUCLEOTIDE SEQUENCE [MRNA]</scope>
    <source>
        <tissue>Ovary</tissue>
    </source>
</reference>
<name>CCNB2_ORYCU</name>
<proteinExistence type="evidence at transcript level"/>